<organism>
    <name type="scientific">Synechococcus sp. (strain JA-2-3B'a(2-13))</name>
    <name type="common">Cyanobacteria bacterium Yellowstone B-Prime</name>
    <dbReference type="NCBI Taxonomy" id="321332"/>
    <lineage>
        <taxon>Bacteria</taxon>
        <taxon>Bacillati</taxon>
        <taxon>Cyanobacteriota</taxon>
        <taxon>Cyanophyceae</taxon>
        <taxon>Synechococcales</taxon>
        <taxon>Synechococcaceae</taxon>
        <taxon>Synechococcus</taxon>
    </lineage>
</organism>
<feature type="chain" id="PRO_0000256493" description="1-deoxy-D-xylulose-5-phosphate synthase">
    <location>
        <begin position="1"/>
        <end position="648"/>
    </location>
</feature>
<feature type="binding site" evidence="1">
    <location>
        <position position="74"/>
    </location>
    <ligand>
        <name>thiamine diphosphate</name>
        <dbReference type="ChEBI" id="CHEBI:58937"/>
    </ligand>
</feature>
<feature type="binding site" evidence="1">
    <location>
        <begin position="115"/>
        <end position="117"/>
    </location>
    <ligand>
        <name>thiamine diphosphate</name>
        <dbReference type="ChEBI" id="CHEBI:58937"/>
    </ligand>
</feature>
<feature type="binding site" evidence="1">
    <location>
        <position position="146"/>
    </location>
    <ligand>
        <name>Mg(2+)</name>
        <dbReference type="ChEBI" id="CHEBI:18420"/>
    </ligand>
</feature>
<feature type="binding site" evidence="1">
    <location>
        <begin position="147"/>
        <end position="148"/>
    </location>
    <ligand>
        <name>thiamine diphosphate</name>
        <dbReference type="ChEBI" id="CHEBI:58937"/>
    </ligand>
</feature>
<feature type="binding site" evidence="1">
    <location>
        <position position="176"/>
    </location>
    <ligand>
        <name>Mg(2+)</name>
        <dbReference type="ChEBI" id="CHEBI:18420"/>
    </ligand>
</feature>
<feature type="binding site" evidence="1">
    <location>
        <position position="176"/>
    </location>
    <ligand>
        <name>thiamine diphosphate</name>
        <dbReference type="ChEBI" id="CHEBI:58937"/>
    </ligand>
</feature>
<feature type="binding site" evidence="1">
    <location>
        <position position="292"/>
    </location>
    <ligand>
        <name>thiamine diphosphate</name>
        <dbReference type="ChEBI" id="CHEBI:58937"/>
    </ligand>
</feature>
<feature type="binding site" evidence="1">
    <location>
        <position position="375"/>
    </location>
    <ligand>
        <name>thiamine diphosphate</name>
        <dbReference type="ChEBI" id="CHEBI:58937"/>
    </ligand>
</feature>
<evidence type="ECO:0000255" key="1">
    <source>
        <dbReference type="HAMAP-Rule" id="MF_00315"/>
    </source>
</evidence>
<proteinExistence type="inferred from homology"/>
<sequence length="648" mass="69900">MHLSDITHPNQLRNLNLSQLRSLARQIRDKHLQTAANSPVGCHLGPGLGVVELTLALYKTLDLDRDKVIWDVGHQAYAHKMLTGRYHNFHTLRQKGGISGYLKRSESRFDHFGAGHASTSISAALGMAIARDRRGDNFKVVAIIGDGALTGGMAYEAINHAGHLPKTNLMVVLNDNGMSISPNVGAIPRYLNRLRLSPPVQFLADSLEEQLKNLPLLGSSLSPEIDRLKETVKLVTAVQNNKAGIIFEELGFTYVGPVDGHNLAELLDAFELAHGISGPVLVHVATVKGKGYPPAEAEQVGYHAQSRFDLATGKPYPPTKPKPPSYSKVFGHALCKLAERDPRIIGITAAMDTGTGLDKLKEKLPDQFVDVGIAEQHAVTLAAGMACEGMRPVVAIYSTFLQRAYDQIIHDVCIQKLPVFFCLDRAGVVGADGPTHQGMYDIAYLRCIPEMVLMAPKDEAELQRMVVTGIQYTQGPIAMRYPRGSGVGVPLAEEGWEPLPIGKAEVLRSGGEVLILAYGSMVHPSLQAAEILKEHGISATVVNARFAKPLDTELILPLAEQSRLVVTVEEGCLMGGFGSAVAEALLDADLAVPLLRLGVPDVWVEHATPEESLAELGLNSAGIAERIRAKFQARVLKGSPAELPTVNS</sequence>
<reference key="1">
    <citation type="journal article" date="2007" name="ISME J.">
        <title>Population level functional diversity in a microbial community revealed by comparative genomic and metagenomic analyses.</title>
        <authorList>
            <person name="Bhaya D."/>
            <person name="Grossman A.R."/>
            <person name="Steunou A.-S."/>
            <person name="Khuri N."/>
            <person name="Cohan F.M."/>
            <person name="Hamamura N."/>
            <person name="Melendrez M.C."/>
            <person name="Bateson M.M."/>
            <person name="Ward D.M."/>
            <person name="Heidelberg J.F."/>
        </authorList>
    </citation>
    <scope>NUCLEOTIDE SEQUENCE [LARGE SCALE GENOMIC DNA]</scope>
    <source>
        <strain>JA-2-3B'a(2-13)</strain>
    </source>
</reference>
<name>DXS_SYNJB</name>
<protein>
    <recommendedName>
        <fullName evidence="1">1-deoxy-D-xylulose-5-phosphate synthase</fullName>
        <ecNumber evidence="1">2.2.1.7</ecNumber>
    </recommendedName>
    <alternativeName>
        <fullName evidence="1">1-deoxyxylulose-5-phosphate synthase</fullName>
        <shortName evidence="1">DXP synthase</shortName>
        <shortName evidence="1">DXPS</shortName>
    </alternativeName>
</protein>
<keyword id="KW-0414">Isoprene biosynthesis</keyword>
<keyword id="KW-0460">Magnesium</keyword>
<keyword id="KW-0479">Metal-binding</keyword>
<keyword id="KW-1185">Reference proteome</keyword>
<keyword id="KW-0784">Thiamine biosynthesis</keyword>
<keyword id="KW-0786">Thiamine pyrophosphate</keyword>
<keyword id="KW-0808">Transferase</keyword>
<comment type="function">
    <text evidence="1">Catalyzes the acyloin condensation reaction between C atoms 2 and 3 of pyruvate and glyceraldehyde 3-phosphate to yield 1-deoxy-D-xylulose-5-phosphate (DXP).</text>
</comment>
<comment type="catalytic activity">
    <reaction evidence="1">
        <text>D-glyceraldehyde 3-phosphate + pyruvate + H(+) = 1-deoxy-D-xylulose 5-phosphate + CO2</text>
        <dbReference type="Rhea" id="RHEA:12605"/>
        <dbReference type="ChEBI" id="CHEBI:15361"/>
        <dbReference type="ChEBI" id="CHEBI:15378"/>
        <dbReference type="ChEBI" id="CHEBI:16526"/>
        <dbReference type="ChEBI" id="CHEBI:57792"/>
        <dbReference type="ChEBI" id="CHEBI:59776"/>
        <dbReference type="EC" id="2.2.1.7"/>
    </reaction>
</comment>
<comment type="cofactor">
    <cofactor evidence="1">
        <name>Mg(2+)</name>
        <dbReference type="ChEBI" id="CHEBI:18420"/>
    </cofactor>
    <text evidence="1">Binds 1 Mg(2+) ion per subunit.</text>
</comment>
<comment type="cofactor">
    <cofactor evidence="1">
        <name>thiamine diphosphate</name>
        <dbReference type="ChEBI" id="CHEBI:58937"/>
    </cofactor>
    <text evidence="1">Binds 1 thiamine pyrophosphate per subunit.</text>
</comment>
<comment type="pathway">
    <text evidence="1">Metabolic intermediate biosynthesis; 1-deoxy-D-xylulose 5-phosphate biosynthesis; 1-deoxy-D-xylulose 5-phosphate from D-glyceraldehyde 3-phosphate and pyruvate: step 1/1.</text>
</comment>
<comment type="subunit">
    <text evidence="1">Homodimer.</text>
</comment>
<comment type="similarity">
    <text evidence="1">Belongs to the transketolase family. DXPS subfamily.</text>
</comment>
<accession>Q2JK64</accession>
<dbReference type="EC" id="2.2.1.7" evidence="1"/>
<dbReference type="EMBL" id="CP000240">
    <property type="protein sequence ID" value="ABD02931.1"/>
    <property type="molecule type" value="Genomic_DNA"/>
</dbReference>
<dbReference type="RefSeq" id="WP_011433570.1">
    <property type="nucleotide sequence ID" value="NC_007776.1"/>
</dbReference>
<dbReference type="SMR" id="Q2JK64"/>
<dbReference type="STRING" id="321332.CYB_1983"/>
<dbReference type="KEGG" id="cyb:CYB_1983"/>
<dbReference type="eggNOG" id="COG1154">
    <property type="taxonomic scope" value="Bacteria"/>
</dbReference>
<dbReference type="HOGENOM" id="CLU_009227_1_4_3"/>
<dbReference type="OrthoDB" id="9803371at2"/>
<dbReference type="UniPathway" id="UPA00064">
    <property type="reaction ID" value="UER00091"/>
</dbReference>
<dbReference type="Proteomes" id="UP000001938">
    <property type="component" value="Chromosome"/>
</dbReference>
<dbReference type="GO" id="GO:0005829">
    <property type="term" value="C:cytosol"/>
    <property type="evidence" value="ECO:0007669"/>
    <property type="project" value="TreeGrafter"/>
</dbReference>
<dbReference type="GO" id="GO:0008661">
    <property type="term" value="F:1-deoxy-D-xylulose-5-phosphate synthase activity"/>
    <property type="evidence" value="ECO:0007669"/>
    <property type="project" value="UniProtKB-UniRule"/>
</dbReference>
<dbReference type="GO" id="GO:0000287">
    <property type="term" value="F:magnesium ion binding"/>
    <property type="evidence" value="ECO:0007669"/>
    <property type="project" value="UniProtKB-UniRule"/>
</dbReference>
<dbReference type="GO" id="GO:0030976">
    <property type="term" value="F:thiamine pyrophosphate binding"/>
    <property type="evidence" value="ECO:0007669"/>
    <property type="project" value="UniProtKB-UniRule"/>
</dbReference>
<dbReference type="GO" id="GO:0052865">
    <property type="term" value="P:1-deoxy-D-xylulose 5-phosphate biosynthetic process"/>
    <property type="evidence" value="ECO:0007669"/>
    <property type="project" value="UniProtKB-UniPathway"/>
</dbReference>
<dbReference type="GO" id="GO:0019288">
    <property type="term" value="P:isopentenyl diphosphate biosynthetic process, methylerythritol 4-phosphate pathway"/>
    <property type="evidence" value="ECO:0007669"/>
    <property type="project" value="TreeGrafter"/>
</dbReference>
<dbReference type="GO" id="GO:0016114">
    <property type="term" value="P:terpenoid biosynthetic process"/>
    <property type="evidence" value="ECO:0007669"/>
    <property type="project" value="UniProtKB-UniRule"/>
</dbReference>
<dbReference type="GO" id="GO:0009228">
    <property type="term" value="P:thiamine biosynthetic process"/>
    <property type="evidence" value="ECO:0007669"/>
    <property type="project" value="UniProtKB-UniRule"/>
</dbReference>
<dbReference type="CDD" id="cd02007">
    <property type="entry name" value="TPP_DXS"/>
    <property type="match status" value="1"/>
</dbReference>
<dbReference type="CDD" id="cd07033">
    <property type="entry name" value="TPP_PYR_DXS_TK_like"/>
    <property type="match status" value="1"/>
</dbReference>
<dbReference type="FunFam" id="3.40.50.920:FF:000002">
    <property type="entry name" value="1-deoxy-D-xylulose-5-phosphate synthase"/>
    <property type="match status" value="1"/>
</dbReference>
<dbReference type="FunFam" id="3.40.50.970:FF:000005">
    <property type="entry name" value="1-deoxy-D-xylulose-5-phosphate synthase"/>
    <property type="match status" value="1"/>
</dbReference>
<dbReference type="Gene3D" id="3.40.50.920">
    <property type="match status" value="1"/>
</dbReference>
<dbReference type="Gene3D" id="3.40.50.970">
    <property type="match status" value="2"/>
</dbReference>
<dbReference type="HAMAP" id="MF_00315">
    <property type="entry name" value="DXP_synth"/>
    <property type="match status" value="1"/>
</dbReference>
<dbReference type="InterPro" id="IPR005477">
    <property type="entry name" value="Dxylulose-5-P_synthase"/>
</dbReference>
<dbReference type="InterPro" id="IPR029061">
    <property type="entry name" value="THDP-binding"/>
</dbReference>
<dbReference type="InterPro" id="IPR009014">
    <property type="entry name" value="Transketo_C/PFOR_II"/>
</dbReference>
<dbReference type="InterPro" id="IPR005475">
    <property type="entry name" value="Transketolase-like_Pyr-bd"/>
</dbReference>
<dbReference type="InterPro" id="IPR020826">
    <property type="entry name" value="Transketolase_BS"/>
</dbReference>
<dbReference type="InterPro" id="IPR033248">
    <property type="entry name" value="Transketolase_C"/>
</dbReference>
<dbReference type="NCBIfam" id="TIGR00204">
    <property type="entry name" value="dxs"/>
    <property type="match status" value="1"/>
</dbReference>
<dbReference type="NCBIfam" id="NF003933">
    <property type="entry name" value="PRK05444.2-2"/>
    <property type="match status" value="1"/>
</dbReference>
<dbReference type="PANTHER" id="PTHR43322">
    <property type="entry name" value="1-D-DEOXYXYLULOSE 5-PHOSPHATE SYNTHASE-RELATED"/>
    <property type="match status" value="1"/>
</dbReference>
<dbReference type="PANTHER" id="PTHR43322:SF5">
    <property type="entry name" value="1-DEOXY-D-XYLULOSE-5-PHOSPHATE SYNTHASE, CHLOROPLASTIC"/>
    <property type="match status" value="1"/>
</dbReference>
<dbReference type="Pfam" id="PF13292">
    <property type="entry name" value="DXP_synthase_N"/>
    <property type="match status" value="1"/>
</dbReference>
<dbReference type="Pfam" id="PF02779">
    <property type="entry name" value="Transket_pyr"/>
    <property type="match status" value="1"/>
</dbReference>
<dbReference type="Pfam" id="PF02780">
    <property type="entry name" value="Transketolase_C"/>
    <property type="match status" value="1"/>
</dbReference>
<dbReference type="SMART" id="SM00861">
    <property type="entry name" value="Transket_pyr"/>
    <property type="match status" value="1"/>
</dbReference>
<dbReference type="SUPFAM" id="SSF52518">
    <property type="entry name" value="Thiamin diphosphate-binding fold (THDP-binding)"/>
    <property type="match status" value="2"/>
</dbReference>
<dbReference type="SUPFAM" id="SSF52922">
    <property type="entry name" value="TK C-terminal domain-like"/>
    <property type="match status" value="1"/>
</dbReference>
<dbReference type="PROSITE" id="PS00802">
    <property type="entry name" value="TRANSKETOLASE_2"/>
    <property type="match status" value="1"/>
</dbReference>
<gene>
    <name evidence="1" type="primary">dxs</name>
    <name type="ordered locus">CYB_1983</name>
</gene>